<reference key="1">
    <citation type="journal article" date="2011" name="Proc. Natl. Acad. Sci. U.S.A.">
        <title>Genomic anatomy of Escherichia coli O157:H7 outbreaks.</title>
        <authorList>
            <person name="Eppinger M."/>
            <person name="Mammel M.K."/>
            <person name="Leclerc J.E."/>
            <person name="Ravel J."/>
            <person name="Cebula T.A."/>
        </authorList>
    </citation>
    <scope>NUCLEOTIDE SEQUENCE [LARGE SCALE GENOMIC DNA]</scope>
    <source>
        <strain>EC4115 / EHEC</strain>
    </source>
</reference>
<accession>B5YT16</accession>
<feature type="chain" id="PRO_1000141088" description="Small ribosomal subunit protein uS11">
    <location>
        <begin position="1"/>
        <end position="129"/>
    </location>
</feature>
<organism>
    <name type="scientific">Escherichia coli O157:H7 (strain EC4115 / EHEC)</name>
    <dbReference type="NCBI Taxonomy" id="444450"/>
    <lineage>
        <taxon>Bacteria</taxon>
        <taxon>Pseudomonadati</taxon>
        <taxon>Pseudomonadota</taxon>
        <taxon>Gammaproteobacteria</taxon>
        <taxon>Enterobacterales</taxon>
        <taxon>Enterobacteriaceae</taxon>
        <taxon>Escherichia</taxon>
    </lineage>
</organism>
<keyword id="KW-0687">Ribonucleoprotein</keyword>
<keyword id="KW-0689">Ribosomal protein</keyword>
<keyword id="KW-0694">RNA-binding</keyword>
<keyword id="KW-0699">rRNA-binding</keyword>
<evidence type="ECO:0000255" key="1">
    <source>
        <dbReference type="HAMAP-Rule" id="MF_01310"/>
    </source>
</evidence>
<evidence type="ECO:0000305" key="2"/>
<gene>
    <name evidence="1" type="primary">rpsK</name>
    <name type="ordered locus">ECH74115_4619</name>
</gene>
<comment type="function">
    <text evidence="1">Located on the platform of the 30S subunit, it bridges several disparate RNA helices of the 16S rRNA. Forms part of the Shine-Dalgarno cleft in the 70S ribosome.</text>
</comment>
<comment type="subunit">
    <text evidence="1">Part of the 30S ribosomal subunit. Interacts with proteins S7 and S18. Binds to IF-3.</text>
</comment>
<comment type="similarity">
    <text evidence="1">Belongs to the universal ribosomal protein uS11 family.</text>
</comment>
<dbReference type="EMBL" id="CP001164">
    <property type="protein sequence ID" value="ACI36914.1"/>
    <property type="molecule type" value="Genomic_DNA"/>
</dbReference>
<dbReference type="RefSeq" id="WP_001029684.1">
    <property type="nucleotide sequence ID" value="NC_011353.1"/>
</dbReference>
<dbReference type="SMR" id="B5YT16"/>
<dbReference type="GeneID" id="93778690"/>
<dbReference type="KEGG" id="ecf:ECH74115_4619"/>
<dbReference type="HOGENOM" id="CLU_072439_5_0_6"/>
<dbReference type="GO" id="GO:1990904">
    <property type="term" value="C:ribonucleoprotein complex"/>
    <property type="evidence" value="ECO:0007669"/>
    <property type="project" value="UniProtKB-KW"/>
</dbReference>
<dbReference type="GO" id="GO:0005840">
    <property type="term" value="C:ribosome"/>
    <property type="evidence" value="ECO:0007669"/>
    <property type="project" value="UniProtKB-KW"/>
</dbReference>
<dbReference type="GO" id="GO:0019843">
    <property type="term" value="F:rRNA binding"/>
    <property type="evidence" value="ECO:0007669"/>
    <property type="project" value="UniProtKB-UniRule"/>
</dbReference>
<dbReference type="GO" id="GO:0003735">
    <property type="term" value="F:structural constituent of ribosome"/>
    <property type="evidence" value="ECO:0007669"/>
    <property type="project" value="InterPro"/>
</dbReference>
<dbReference type="GO" id="GO:0006412">
    <property type="term" value="P:translation"/>
    <property type="evidence" value="ECO:0007669"/>
    <property type="project" value="UniProtKB-UniRule"/>
</dbReference>
<dbReference type="FunFam" id="3.30.420.80:FF:000001">
    <property type="entry name" value="30S ribosomal protein S11"/>
    <property type="match status" value="1"/>
</dbReference>
<dbReference type="Gene3D" id="3.30.420.80">
    <property type="entry name" value="Ribosomal protein S11"/>
    <property type="match status" value="1"/>
</dbReference>
<dbReference type="HAMAP" id="MF_01310">
    <property type="entry name" value="Ribosomal_uS11"/>
    <property type="match status" value="1"/>
</dbReference>
<dbReference type="InterPro" id="IPR001971">
    <property type="entry name" value="Ribosomal_uS11"/>
</dbReference>
<dbReference type="InterPro" id="IPR019981">
    <property type="entry name" value="Ribosomal_uS11_bac-type"/>
</dbReference>
<dbReference type="InterPro" id="IPR018102">
    <property type="entry name" value="Ribosomal_uS11_CS"/>
</dbReference>
<dbReference type="InterPro" id="IPR036967">
    <property type="entry name" value="Ribosomal_uS11_sf"/>
</dbReference>
<dbReference type="NCBIfam" id="NF003698">
    <property type="entry name" value="PRK05309.1"/>
    <property type="match status" value="1"/>
</dbReference>
<dbReference type="NCBIfam" id="TIGR03632">
    <property type="entry name" value="uS11_bact"/>
    <property type="match status" value="1"/>
</dbReference>
<dbReference type="PANTHER" id="PTHR11759">
    <property type="entry name" value="40S RIBOSOMAL PROTEIN S14/30S RIBOSOMAL PROTEIN S11"/>
    <property type="match status" value="1"/>
</dbReference>
<dbReference type="Pfam" id="PF00411">
    <property type="entry name" value="Ribosomal_S11"/>
    <property type="match status" value="1"/>
</dbReference>
<dbReference type="PIRSF" id="PIRSF002131">
    <property type="entry name" value="Ribosomal_S11"/>
    <property type="match status" value="1"/>
</dbReference>
<dbReference type="SUPFAM" id="SSF53137">
    <property type="entry name" value="Translational machinery components"/>
    <property type="match status" value="1"/>
</dbReference>
<dbReference type="PROSITE" id="PS00054">
    <property type="entry name" value="RIBOSOMAL_S11"/>
    <property type="match status" value="1"/>
</dbReference>
<protein>
    <recommendedName>
        <fullName evidence="1">Small ribosomal subunit protein uS11</fullName>
    </recommendedName>
    <alternativeName>
        <fullName evidence="2">30S ribosomal protein S11</fullName>
    </alternativeName>
</protein>
<proteinExistence type="inferred from homology"/>
<name>RS11_ECO5E</name>
<sequence length="129" mass="13845">MAKAPIRARKRVRKQVSDGVAHIHASFNNTIVTITDRQGNALGWATAGGSGFRGSRKSTPFAAQVAAERCADAVKEYGIKNLEVMVKGPGPGRESTIRALNAAGFRITNITDVTPIPHNGCRPPKKRRV</sequence>